<evidence type="ECO:0000250" key="1"/>
<evidence type="ECO:0000255" key="2">
    <source>
        <dbReference type="PROSITE-ProRule" id="PRU00089"/>
    </source>
</evidence>
<evidence type="ECO:0000256" key="3">
    <source>
        <dbReference type="SAM" id="MobiDB-lite"/>
    </source>
</evidence>
<accession>Q3Y598</accession>
<accession>Q1JQB7</accession>
<proteinExistence type="evidence at transcript level"/>
<protein>
    <recommendedName>
        <fullName>Hepatocyte nuclear factor 3-gamma</fullName>
        <shortName>HNF-3-gamma</shortName>
        <shortName>HNF-3G</shortName>
    </recommendedName>
    <alternativeName>
        <fullName>Forkhead box protein A3</fullName>
    </alternativeName>
</protein>
<sequence>MLGSVKMEAHDLAEWSYYPEAGEVYSPVTPVPTMAPLNSYMTLNPLSSPYPPGGLPASPLPTGPLAPPAPTAPLGPTFPGLGASTGGGSSSGYGGPGPGLVHGKEMPKGYRRPLAHAKPPYSYISLITMAIQQAPGKMLTLSEIYQWIMDLFPYYRENQQRWQNSIRHSLSFNDCFVKVARSPDKPGKGSYWALHPSSGNMFENGCYLRRQKRFKLEEKVKKGGGGSSASRNSAGSASTATAPAATVASTPQPQPPPPEPEAQGGDEVGALDCGSPAAPSTPYFTGLELPGELKLDAPYNFNHPFSINNLMSEQSPAPPKLDVGFGGYGAEGGEPGVYYQGLYSRSLLNAS</sequence>
<name>FOXA3_BOVIN</name>
<keyword id="KW-0010">Activator</keyword>
<keyword id="KW-0238">DNA-binding</keyword>
<keyword id="KW-0539">Nucleus</keyword>
<keyword id="KW-1185">Reference proteome</keyword>
<keyword id="KW-0804">Transcription</keyword>
<keyword id="KW-0805">Transcription regulation</keyword>
<comment type="function">
    <text evidence="1">Transcription activator for a number of liver genes such as AFP, albumin, tyrosine aminotransferase, PEPCK, etc. Interacts with the cis-acting regulatory regions of these genes (By similarity).</text>
</comment>
<comment type="subcellular location">
    <subcellularLocation>
        <location evidence="2">Nucleus</location>
    </subcellularLocation>
</comment>
<organism>
    <name type="scientific">Bos taurus</name>
    <name type="common">Bovine</name>
    <dbReference type="NCBI Taxonomy" id="9913"/>
    <lineage>
        <taxon>Eukaryota</taxon>
        <taxon>Metazoa</taxon>
        <taxon>Chordata</taxon>
        <taxon>Craniata</taxon>
        <taxon>Vertebrata</taxon>
        <taxon>Euteleostomi</taxon>
        <taxon>Mammalia</taxon>
        <taxon>Eutheria</taxon>
        <taxon>Laurasiatheria</taxon>
        <taxon>Artiodactyla</taxon>
        <taxon>Ruminantia</taxon>
        <taxon>Pecora</taxon>
        <taxon>Bovidae</taxon>
        <taxon>Bovinae</taxon>
        <taxon>Bos</taxon>
    </lineage>
</organism>
<dbReference type="EMBL" id="DQ157763">
    <property type="protein sequence ID" value="AAZ81946.1"/>
    <property type="molecule type" value="mRNA"/>
</dbReference>
<dbReference type="EMBL" id="BC116076">
    <property type="protein sequence ID" value="AAI16077.1"/>
    <property type="molecule type" value="mRNA"/>
</dbReference>
<dbReference type="RefSeq" id="NP_001028291.1">
    <property type="nucleotide sequence ID" value="NM_001033119.2"/>
</dbReference>
<dbReference type="SMR" id="Q3Y598"/>
<dbReference type="FunCoup" id="Q3Y598">
    <property type="interactions" value="1"/>
</dbReference>
<dbReference type="STRING" id="9913.ENSBTAP00000016056"/>
<dbReference type="PaxDb" id="9913-ENSBTAP00000016056"/>
<dbReference type="Ensembl" id="ENSBTAT00000131953.1">
    <property type="protein sequence ID" value="ENSBTAP00000103894.1"/>
    <property type="gene ID" value="ENSBTAG00000012104.5"/>
</dbReference>
<dbReference type="GeneID" id="503622"/>
<dbReference type="KEGG" id="bta:503622"/>
<dbReference type="CTD" id="3171"/>
<dbReference type="VEuPathDB" id="HostDB:ENSBTAG00000012104"/>
<dbReference type="VGNC" id="VGNC:29079">
    <property type="gene designation" value="FOXA3"/>
</dbReference>
<dbReference type="eggNOG" id="KOG3563">
    <property type="taxonomic scope" value="Eukaryota"/>
</dbReference>
<dbReference type="GeneTree" id="ENSGT00940000162453"/>
<dbReference type="HOGENOM" id="CLU_027910_0_0_1"/>
<dbReference type="InParanoid" id="Q3Y598"/>
<dbReference type="OMA" id="SHDISEW"/>
<dbReference type="OrthoDB" id="5954824at2759"/>
<dbReference type="TreeFam" id="TF316127"/>
<dbReference type="Proteomes" id="UP000009136">
    <property type="component" value="Chromosome 18"/>
</dbReference>
<dbReference type="Bgee" id="ENSBTAG00000012104">
    <property type="expression patterns" value="Expressed in abomasum and 56 other cell types or tissues"/>
</dbReference>
<dbReference type="GO" id="GO:0015629">
    <property type="term" value="C:actin cytoskeleton"/>
    <property type="evidence" value="ECO:0007669"/>
    <property type="project" value="Ensembl"/>
</dbReference>
<dbReference type="GO" id="GO:0005654">
    <property type="term" value="C:nucleoplasm"/>
    <property type="evidence" value="ECO:0007669"/>
    <property type="project" value="Ensembl"/>
</dbReference>
<dbReference type="GO" id="GO:0000981">
    <property type="term" value="F:DNA-binding transcription factor activity, RNA polymerase II-specific"/>
    <property type="evidence" value="ECO:0000318"/>
    <property type="project" value="GO_Central"/>
</dbReference>
<dbReference type="GO" id="GO:0019904">
    <property type="term" value="F:protein domain specific binding"/>
    <property type="evidence" value="ECO:0007669"/>
    <property type="project" value="InterPro"/>
</dbReference>
<dbReference type="GO" id="GO:0000978">
    <property type="term" value="F:RNA polymerase II cis-regulatory region sequence-specific DNA binding"/>
    <property type="evidence" value="ECO:0000318"/>
    <property type="project" value="GO_Central"/>
</dbReference>
<dbReference type="GO" id="GO:0009653">
    <property type="term" value="P:anatomical structure morphogenesis"/>
    <property type="evidence" value="ECO:0000318"/>
    <property type="project" value="GO_Central"/>
</dbReference>
<dbReference type="GO" id="GO:0030154">
    <property type="term" value="P:cell differentiation"/>
    <property type="evidence" value="ECO:0000318"/>
    <property type="project" value="GO_Central"/>
</dbReference>
<dbReference type="GO" id="GO:0009267">
    <property type="term" value="P:cellular response to starvation"/>
    <property type="evidence" value="ECO:0007669"/>
    <property type="project" value="Ensembl"/>
</dbReference>
<dbReference type="GO" id="GO:0061484">
    <property type="term" value="P:hematopoietic stem cell homeostasis"/>
    <property type="evidence" value="ECO:0007669"/>
    <property type="project" value="Ensembl"/>
</dbReference>
<dbReference type="GO" id="GO:0001678">
    <property type="term" value="P:intracellular glucose homeostasis"/>
    <property type="evidence" value="ECO:0007669"/>
    <property type="project" value="Ensembl"/>
</dbReference>
<dbReference type="GO" id="GO:0045944">
    <property type="term" value="P:positive regulation of transcription by RNA polymerase II"/>
    <property type="evidence" value="ECO:0007669"/>
    <property type="project" value="Ensembl"/>
</dbReference>
<dbReference type="GO" id="GO:0006357">
    <property type="term" value="P:regulation of transcription by RNA polymerase II"/>
    <property type="evidence" value="ECO:0000318"/>
    <property type="project" value="GO_Central"/>
</dbReference>
<dbReference type="GO" id="GO:0007283">
    <property type="term" value="P:spermatogenesis"/>
    <property type="evidence" value="ECO:0007669"/>
    <property type="project" value="Ensembl"/>
</dbReference>
<dbReference type="GO" id="GO:0006366">
    <property type="term" value="P:transcription by RNA polymerase II"/>
    <property type="evidence" value="ECO:0007669"/>
    <property type="project" value="Ensembl"/>
</dbReference>
<dbReference type="CDD" id="cd20040">
    <property type="entry name" value="FH_FOXA3"/>
    <property type="match status" value="1"/>
</dbReference>
<dbReference type="FunFam" id="1.10.10.10:FF:000042">
    <property type="entry name" value="hepatocyte nuclear factor 3-beta"/>
    <property type="match status" value="1"/>
</dbReference>
<dbReference type="Gene3D" id="1.10.10.10">
    <property type="entry name" value="Winged helix-like DNA-binding domain superfamily/Winged helix DNA-binding domain"/>
    <property type="match status" value="1"/>
</dbReference>
<dbReference type="InterPro" id="IPR047366">
    <property type="entry name" value="FH_FOXA3"/>
</dbReference>
<dbReference type="InterPro" id="IPR013638">
    <property type="entry name" value="Fork-head_N"/>
</dbReference>
<dbReference type="InterPro" id="IPR001766">
    <property type="entry name" value="Fork_head_dom"/>
</dbReference>
<dbReference type="InterPro" id="IPR050211">
    <property type="entry name" value="FOX_domain-containing"/>
</dbReference>
<dbReference type="InterPro" id="IPR018122">
    <property type="entry name" value="TF_fork_head_CS_1"/>
</dbReference>
<dbReference type="InterPro" id="IPR030456">
    <property type="entry name" value="TF_fork_head_CS_2"/>
</dbReference>
<dbReference type="InterPro" id="IPR036388">
    <property type="entry name" value="WH-like_DNA-bd_sf"/>
</dbReference>
<dbReference type="InterPro" id="IPR036390">
    <property type="entry name" value="WH_DNA-bd_sf"/>
</dbReference>
<dbReference type="PANTHER" id="PTHR11829">
    <property type="entry name" value="FORKHEAD BOX PROTEIN"/>
    <property type="match status" value="1"/>
</dbReference>
<dbReference type="PANTHER" id="PTHR11829:SF201">
    <property type="entry name" value="HEPATOCYTE NUCLEAR FACTOR 3-GAMMA"/>
    <property type="match status" value="1"/>
</dbReference>
<dbReference type="Pfam" id="PF00250">
    <property type="entry name" value="Forkhead"/>
    <property type="match status" value="1"/>
</dbReference>
<dbReference type="Pfam" id="PF08430">
    <property type="entry name" value="Forkhead_N"/>
    <property type="match status" value="1"/>
</dbReference>
<dbReference type="PRINTS" id="PR00053">
    <property type="entry name" value="FORKHEAD"/>
</dbReference>
<dbReference type="SMART" id="SM00339">
    <property type="entry name" value="FH"/>
    <property type="match status" value="1"/>
</dbReference>
<dbReference type="SUPFAM" id="SSF46785">
    <property type="entry name" value="Winged helix' DNA-binding domain"/>
    <property type="match status" value="1"/>
</dbReference>
<dbReference type="PROSITE" id="PS00657">
    <property type="entry name" value="FORK_HEAD_1"/>
    <property type="match status" value="1"/>
</dbReference>
<dbReference type="PROSITE" id="PS00658">
    <property type="entry name" value="FORK_HEAD_2"/>
    <property type="match status" value="1"/>
</dbReference>
<dbReference type="PROSITE" id="PS50039">
    <property type="entry name" value="FORK_HEAD_3"/>
    <property type="match status" value="1"/>
</dbReference>
<feature type="chain" id="PRO_0000091799" description="Hepatocyte nuclear factor 3-gamma">
    <location>
        <begin position="1"/>
        <end position="351"/>
    </location>
</feature>
<feature type="DNA-binding region" description="Fork-head" evidence="2">
    <location>
        <begin position="118"/>
        <end position="212"/>
    </location>
</feature>
<feature type="region of interest" description="Disordered" evidence="3">
    <location>
        <begin position="52"/>
        <end position="94"/>
    </location>
</feature>
<feature type="region of interest" description="Disordered" evidence="3">
    <location>
        <begin position="218"/>
        <end position="275"/>
    </location>
</feature>
<feature type="compositionally biased region" description="Pro residues" evidence="3">
    <location>
        <begin position="52"/>
        <end position="73"/>
    </location>
</feature>
<feature type="compositionally biased region" description="Gly residues" evidence="3">
    <location>
        <begin position="83"/>
        <end position="94"/>
    </location>
</feature>
<feature type="compositionally biased region" description="Low complexity" evidence="3">
    <location>
        <begin position="228"/>
        <end position="251"/>
    </location>
</feature>
<reference key="1">
    <citation type="submission" date="2005-08" db="EMBL/GenBank/DDBJ databases">
        <title>Cloning and characterization of the bovine forkhead box A3 (FOXA3) mRNA and promoter.</title>
        <authorList>
            <person name="Wang Y."/>
            <person name="Eleswarapu S."/>
            <person name="Jiang H."/>
        </authorList>
    </citation>
    <scope>NUCLEOTIDE SEQUENCE [MRNA]</scope>
    <source>
        <tissue>Liver</tissue>
    </source>
</reference>
<reference key="2">
    <citation type="submission" date="2006-05" db="EMBL/GenBank/DDBJ databases">
        <authorList>
            <consortium name="NIH - Mammalian Gene Collection (MGC) project"/>
        </authorList>
    </citation>
    <scope>NUCLEOTIDE SEQUENCE [LARGE SCALE MRNA]</scope>
    <source>
        <strain>Hereford</strain>
        <tissue>Ascending colon</tissue>
    </source>
</reference>
<gene>
    <name type="primary">FOXA3</name>
    <name type="synonym">HNF3G</name>
</gene>